<sequence length="299" mass="31108">MHPIRSVLIVTKPGHPTALDLAQDIGVWLTRRGVSCRILEGPGEALPLRQLAADAGLVLVLGGDGTMLGVARRLAGTGVPLLGINLGRVGFLAEVPAGEWAATLERLLAAPLRVERRLALRFGVERGGVEIFQGDAVNDVVINRGALARVITLDIDVDGERLAGLRADGLIISTPTGATGYAVSARGPLMDPALDAFTVTPICPFLGNFPPLVLGGGSVCSVRIREQGTEVHATIDGQEGIALRSGDRITLTGLRDGLCFATLGGGGYCARLRACGFVRDHACTLPDMLPDEGGTSTDV</sequence>
<reference key="1">
    <citation type="journal article" date="2004" name="Nat. Biotechnol.">
        <title>The genome sequence of the anaerobic, sulfate-reducing bacterium Desulfovibrio vulgaris Hildenborough.</title>
        <authorList>
            <person name="Heidelberg J.F."/>
            <person name="Seshadri R."/>
            <person name="Haveman S.A."/>
            <person name="Hemme C.L."/>
            <person name="Paulsen I.T."/>
            <person name="Kolonay J.F."/>
            <person name="Eisen J.A."/>
            <person name="Ward N.L."/>
            <person name="Methe B.A."/>
            <person name="Brinkac L.M."/>
            <person name="Daugherty S.C."/>
            <person name="DeBoy R.T."/>
            <person name="Dodson R.J."/>
            <person name="Durkin A.S."/>
            <person name="Madupu R."/>
            <person name="Nelson W.C."/>
            <person name="Sullivan S.A."/>
            <person name="Fouts D.E."/>
            <person name="Haft D.H."/>
            <person name="Selengut J."/>
            <person name="Peterson J.D."/>
            <person name="Davidsen T.M."/>
            <person name="Zafar N."/>
            <person name="Zhou L."/>
            <person name="Radune D."/>
            <person name="Dimitrov G."/>
            <person name="Hance M."/>
            <person name="Tran K."/>
            <person name="Khouri H.M."/>
            <person name="Gill J."/>
            <person name="Utterback T.R."/>
            <person name="Feldblyum T.V."/>
            <person name="Wall J.D."/>
            <person name="Voordouw G."/>
            <person name="Fraser C.M."/>
        </authorList>
    </citation>
    <scope>NUCLEOTIDE SEQUENCE [LARGE SCALE GENOMIC DNA]</scope>
    <source>
        <strain>ATCC 29579 / DSM 644 / CCUG 34227 / NCIMB 8303 / VKM B-1760 / Hildenborough</strain>
    </source>
</reference>
<dbReference type="EC" id="2.7.1.23" evidence="1"/>
<dbReference type="EMBL" id="AE017285">
    <property type="protein sequence ID" value="AAS96364.1"/>
    <property type="molecule type" value="Genomic_DNA"/>
</dbReference>
<dbReference type="RefSeq" id="WP_010939174.1">
    <property type="nucleotide sequence ID" value="NC_002937.3"/>
</dbReference>
<dbReference type="RefSeq" id="YP_011105.1">
    <property type="nucleotide sequence ID" value="NC_002937.3"/>
</dbReference>
<dbReference type="SMR" id="Q72AV2"/>
<dbReference type="STRING" id="882.DVU_1888"/>
<dbReference type="PaxDb" id="882-DVU_1888"/>
<dbReference type="EnsemblBacteria" id="AAS96364">
    <property type="protein sequence ID" value="AAS96364"/>
    <property type="gene ID" value="DVU_1888"/>
</dbReference>
<dbReference type="KEGG" id="dvu:DVU_1888"/>
<dbReference type="PATRIC" id="fig|882.5.peg.1730"/>
<dbReference type="eggNOG" id="COG0061">
    <property type="taxonomic scope" value="Bacteria"/>
</dbReference>
<dbReference type="HOGENOM" id="CLU_008831_0_0_7"/>
<dbReference type="OrthoDB" id="9774737at2"/>
<dbReference type="PhylomeDB" id="Q72AV2"/>
<dbReference type="Proteomes" id="UP000002194">
    <property type="component" value="Chromosome"/>
</dbReference>
<dbReference type="GO" id="GO:0005737">
    <property type="term" value="C:cytoplasm"/>
    <property type="evidence" value="ECO:0007669"/>
    <property type="project" value="UniProtKB-SubCell"/>
</dbReference>
<dbReference type="GO" id="GO:0005524">
    <property type="term" value="F:ATP binding"/>
    <property type="evidence" value="ECO:0007669"/>
    <property type="project" value="UniProtKB-KW"/>
</dbReference>
<dbReference type="GO" id="GO:0046872">
    <property type="term" value="F:metal ion binding"/>
    <property type="evidence" value="ECO:0007669"/>
    <property type="project" value="UniProtKB-UniRule"/>
</dbReference>
<dbReference type="GO" id="GO:0051287">
    <property type="term" value="F:NAD binding"/>
    <property type="evidence" value="ECO:0007669"/>
    <property type="project" value="UniProtKB-ARBA"/>
</dbReference>
<dbReference type="GO" id="GO:0003951">
    <property type="term" value="F:NAD+ kinase activity"/>
    <property type="evidence" value="ECO:0007669"/>
    <property type="project" value="UniProtKB-UniRule"/>
</dbReference>
<dbReference type="GO" id="GO:0019674">
    <property type="term" value="P:NAD metabolic process"/>
    <property type="evidence" value="ECO:0007669"/>
    <property type="project" value="InterPro"/>
</dbReference>
<dbReference type="GO" id="GO:0006741">
    <property type="term" value="P:NADP biosynthetic process"/>
    <property type="evidence" value="ECO:0007669"/>
    <property type="project" value="UniProtKB-UniRule"/>
</dbReference>
<dbReference type="Gene3D" id="3.40.50.10330">
    <property type="entry name" value="Probable inorganic polyphosphate/atp-NAD kinase, domain 1"/>
    <property type="match status" value="1"/>
</dbReference>
<dbReference type="Gene3D" id="2.60.200.30">
    <property type="entry name" value="Probable inorganic polyphosphate/atp-NAD kinase, domain 2"/>
    <property type="match status" value="1"/>
</dbReference>
<dbReference type="HAMAP" id="MF_00361">
    <property type="entry name" value="NAD_kinase"/>
    <property type="match status" value="1"/>
</dbReference>
<dbReference type="InterPro" id="IPR017438">
    <property type="entry name" value="ATP-NAD_kinase_N"/>
</dbReference>
<dbReference type="InterPro" id="IPR017437">
    <property type="entry name" value="ATP-NAD_kinase_PpnK-typ_C"/>
</dbReference>
<dbReference type="InterPro" id="IPR016064">
    <property type="entry name" value="NAD/diacylglycerol_kinase_sf"/>
</dbReference>
<dbReference type="InterPro" id="IPR002504">
    <property type="entry name" value="NADK"/>
</dbReference>
<dbReference type="PANTHER" id="PTHR20275">
    <property type="entry name" value="NAD KINASE"/>
    <property type="match status" value="1"/>
</dbReference>
<dbReference type="PANTHER" id="PTHR20275:SF0">
    <property type="entry name" value="NAD KINASE"/>
    <property type="match status" value="1"/>
</dbReference>
<dbReference type="Pfam" id="PF01513">
    <property type="entry name" value="NAD_kinase"/>
    <property type="match status" value="1"/>
</dbReference>
<dbReference type="Pfam" id="PF20143">
    <property type="entry name" value="NAD_kinase_C"/>
    <property type="match status" value="1"/>
</dbReference>
<dbReference type="SUPFAM" id="SSF111331">
    <property type="entry name" value="NAD kinase/diacylglycerol kinase-like"/>
    <property type="match status" value="1"/>
</dbReference>
<protein>
    <recommendedName>
        <fullName evidence="1">NAD kinase</fullName>
        <ecNumber evidence="1">2.7.1.23</ecNumber>
    </recommendedName>
    <alternativeName>
        <fullName evidence="1">ATP-dependent NAD kinase</fullName>
    </alternativeName>
</protein>
<accession>Q72AV2</accession>
<gene>
    <name evidence="1" type="primary">nadK</name>
    <name type="ordered locus">DVU_1888</name>
</gene>
<organism>
    <name type="scientific">Nitratidesulfovibrio vulgaris (strain ATCC 29579 / DSM 644 / CCUG 34227 / NCIMB 8303 / VKM B-1760 / Hildenborough)</name>
    <name type="common">Desulfovibrio vulgaris</name>
    <dbReference type="NCBI Taxonomy" id="882"/>
    <lineage>
        <taxon>Bacteria</taxon>
        <taxon>Pseudomonadati</taxon>
        <taxon>Thermodesulfobacteriota</taxon>
        <taxon>Desulfovibrionia</taxon>
        <taxon>Desulfovibrionales</taxon>
        <taxon>Desulfovibrionaceae</taxon>
        <taxon>Nitratidesulfovibrio</taxon>
    </lineage>
</organism>
<keyword id="KW-0067">ATP-binding</keyword>
<keyword id="KW-0963">Cytoplasm</keyword>
<keyword id="KW-0418">Kinase</keyword>
<keyword id="KW-0520">NAD</keyword>
<keyword id="KW-0521">NADP</keyword>
<keyword id="KW-0547">Nucleotide-binding</keyword>
<keyword id="KW-1185">Reference proteome</keyword>
<keyword id="KW-0808">Transferase</keyword>
<evidence type="ECO:0000255" key="1">
    <source>
        <dbReference type="HAMAP-Rule" id="MF_00361"/>
    </source>
</evidence>
<feature type="chain" id="PRO_0000229634" description="NAD kinase">
    <location>
        <begin position="1"/>
        <end position="299"/>
    </location>
</feature>
<feature type="active site" description="Proton acceptor" evidence="1">
    <location>
        <position position="64"/>
    </location>
</feature>
<feature type="binding site" evidence="1">
    <location>
        <begin position="64"/>
        <end position="65"/>
    </location>
    <ligand>
        <name>NAD(+)</name>
        <dbReference type="ChEBI" id="CHEBI:57540"/>
    </ligand>
</feature>
<feature type="binding site" evidence="1">
    <location>
        <begin position="138"/>
        <end position="139"/>
    </location>
    <ligand>
        <name>NAD(+)</name>
        <dbReference type="ChEBI" id="CHEBI:57540"/>
    </ligand>
</feature>
<feature type="binding site" evidence="1">
    <location>
        <position position="149"/>
    </location>
    <ligand>
        <name>NAD(+)</name>
        <dbReference type="ChEBI" id="CHEBI:57540"/>
    </ligand>
</feature>
<feature type="binding site" evidence="1">
    <location>
        <position position="166"/>
    </location>
    <ligand>
        <name>NAD(+)</name>
        <dbReference type="ChEBI" id="CHEBI:57540"/>
    </ligand>
</feature>
<feature type="binding site" evidence="1">
    <location>
        <position position="168"/>
    </location>
    <ligand>
        <name>NAD(+)</name>
        <dbReference type="ChEBI" id="CHEBI:57540"/>
    </ligand>
</feature>
<feature type="binding site" evidence="1">
    <location>
        <begin position="179"/>
        <end position="184"/>
    </location>
    <ligand>
        <name>NAD(+)</name>
        <dbReference type="ChEBI" id="CHEBI:57540"/>
    </ligand>
</feature>
<feature type="binding site" evidence="1">
    <location>
        <position position="238"/>
    </location>
    <ligand>
        <name>NAD(+)</name>
        <dbReference type="ChEBI" id="CHEBI:57540"/>
    </ligand>
</feature>
<name>NADK_NITV2</name>
<proteinExistence type="inferred from homology"/>
<comment type="function">
    <text evidence="1">Involved in the regulation of the intracellular balance of NAD and NADP, and is a key enzyme in the biosynthesis of NADP. Catalyzes specifically the phosphorylation on 2'-hydroxyl of the adenosine moiety of NAD to yield NADP.</text>
</comment>
<comment type="catalytic activity">
    <reaction evidence="1">
        <text>NAD(+) + ATP = ADP + NADP(+) + H(+)</text>
        <dbReference type="Rhea" id="RHEA:18629"/>
        <dbReference type="ChEBI" id="CHEBI:15378"/>
        <dbReference type="ChEBI" id="CHEBI:30616"/>
        <dbReference type="ChEBI" id="CHEBI:57540"/>
        <dbReference type="ChEBI" id="CHEBI:58349"/>
        <dbReference type="ChEBI" id="CHEBI:456216"/>
        <dbReference type="EC" id="2.7.1.23"/>
    </reaction>
</comment>
<comment type="cofactor">
    <cofactor evidence="1">
        <name>a divalent metal cation</name>
        <dbReference type="ChEBI" id="CHEBI:60240"/>
    </cofactor>
</comment>
<comment type="subcellular location">
    <subcellularLocation>
        <location evidence="1">Cytoplasm</location>
    </subcellularLocation>
</comment>
<comment type="similarity">
    <text evidence="1">Belongs to the NAD kinase family.</text>
</comment>